<reference key="1">
    <citation type="submission" date="1995-01" db="EMBL/GenBank/DDBJ databases">
        <authorList>
            <person name="Palenik B.P."/>
        </authorList>
    </citation>
    <scope>NUCLEOTIDE SEQUENCE [GENOMIC DNA]</scope>
</reference>
<sequence>EVTKPETINYRTLKPEMDGLFCEKIFGPSKDWECHCGKYKRVRHRGIVCERCGVEVTESRVRRHRMGFIKLAAPVSHVWYLKGIPSYVAILLDMPLRDVEQIVYFNCYVVLDPGDHKELKYKQLLTEDEWLEIEDEIYAEESEIENEPVVGIGAEALKQLLEDLNLEEVAEQLREEINGSKGQKRAKLIKRLRVIDNFVATSAR</sequence>
<accession>Q55348</accession>
<protein>
    <recommendedName>
        <fullName>DNA-directed RNA polymerase subunit gamma</fullName>
        <shortName>RNAP subunit gamma</shortName>
        <ecNumber>2.7.7.6</ecNumber>
    </recommendedName>
    <alternativeName>
        <fullName>RNA polymerase subunit gamma</fullName>
    </alternativeName>
    <alternativeName>
        <fullName>Transcriptase subunit gamma</fullName>
    </alternativeName>
</protein>
<comment type="function">
    <text evidence="1">DNA-dependent RNA polymerase catalyzes the transcription of DNA into RNA using the four ribonucleoside triphosphates as substrates.</text>
</comment>
<comment type="catalytic activity">
    <reaction evidence="2">
        <text>RNA(n) + a ribonucleoside 5'-triphosphate = RNA(n+1) + diphosphate</text>
        <dbReference type="Rhea" id="RHEA:21248"/>
        <dbReference type="Rhea" id="RHEA-COMP:14527"/>
        <dbReference type="Rhea" id="RHEA-COMP:17342"/>
        <dbReference type="ChEBI" id="CHEBI:33019"/>
        <dbReference type="ChEBI" id="CHEBI:61557"/>
        <dbReference type="ChEBI" id="CHEBI:140395"/>
        <dbReference type="EC" id="2.7.7.6"/>
    </reaction>
</comment>
<comment type="cofactor">
    <cofactor evidence="2">
        <name>Zn(2+)</name>
        <dbReference type="ChEBI" id="CHEBI:29105"/>
    </cofactor>
    <text evidence="2">Binds 1 Zn(2+) ion per subunit.</text>
</comment>
<comment type="subunit">
    <text evidence="1">In cyanobacteria the RNAP catalytic core is composed of 2 alpha, 1 beta, 1 beta', 1 gamma and 1 omega subunit. When a sigma factor is associated with the core the holoenzyme is formed, which can initiate transcription (By similarity).</text>
</comment>
<comment type="similarity">
    <text evidence="3">Belongs to the RNA polymerase beta' chain family. RpoC1 subfamily.</text>
</comment>
<feature type="chain" id="PRO_0000067855" description="DNA-directed RNA polymerase subunit gamma">
    <location>
        <begin position="1" status="less than"/>
        <end position="204" status="greater than"/>
    </location>
</feature>
<feature type="binding site" evidence="2">
    <location>
        <position position="34"/>
    </location>
    <ligand>
        <name>Zn(2+)</name>
        <dbReference type="ChEBI" id="CHEBI:29105"/>
    </ligand>
</feature>
<feature type="binding site" evidence="2">
    <location>
        <position position="36"/>
    </location>
    <ligand>
        <name>Zn(2+)</name>
        <dbReference type="ChEBI" id="CHEBI:29105"/>
    </ligand>
</feature>
<feature type="binding site" evidence="2">
    <location>
        <position position="49"/>
    </location>
    <ligand>
        <name>Zn(2+)</name>
        <dbReference type="ChEBI" id="CHEBI:29105"/>
    </ligand>
</feature>
<feature type="binding site" evidence="2">
    <location>
        <position position="52"/>
    </location>
    <ligand>
        <name>Zn(2+)</name>
        <dbReference type="ChEBI" id="CHEBI:29105"/>
    </ligand>
</feature>
<feature type="non-terminal residue">
    <location>
        <position position="1"/>
    </location>
</feature>
<feature type="non-terminal residue">
    <location>
        <position position="204"/>
    </location>
</feature>
<dbReference type="EC" id="2.7.7.6"/>
<dbReference type="EMBL" id="L34063">
    <property type="protein sequence ID" value="AAA92727.1"/>
    <property type="molecule type" value="Genomic_DNA"/>
</dbReference>
<dbReference type="SMR" id="Q55348"/>
<dbReference type="GO" id="GO:0000428">
    <property type="term" value="C:DNA-directed RNA polymerase complex"/>
    <property type="evidence" value="ECO:0007669"/>
    <property type="project" value="UniProtKB-KW"/>
</dbReference>
<dbReference type="GO" id="GO:0003677">
    <property type="term" value="F:DNA binding"/>
    <property type="evidence" value="ECO:0007669"/>
    <property type="project" value="InterPro"/>
</dbReference>
<dbReference type="GO" id="GO:0003899">
    <property type="term" value="F:DNA-directed RNA polymerase activity"/>
    <property type="evidence" value="ECO:0007669"/>
    <property type="project" value="UniProtKB-EC"/>
</dbReference>
<dbReference type="GO" id="GO:0046872">
    <property type="term" value="F:metal ion binding"/>
    <property type="evidence" value="ECO:0007669"/>
    <property type="project" value="UniProtKB-KW"/>
</dbReference>
<dbReference type="GO" id="GO:0006351">
    <property type="term" value="P:DNA-templated transcription"/>
    <property type="evidence" value="ECO:0007669"/>
    <property type="project" value="InterPro"/>
</dbReference>
<dbReference type="Gene3D" id="4.10.860.120">
    <property type="entry name" value="RNA polymerase II, clamp domain"/>
    <property type="match status" value="1"/>
</dbReference>
<dbReference type="InterPro" id="IPR045867">
    <property type="entry name" value="DNA-dir_RpoC_beta_prime"/>
</dbReference>
<dbReference type="InterPro" id="IPR007080">
    <property type="entry name" value="RNA_pol_Rpb1_1"/>
</dbReference>
<dbReference type="InterPro" id="IPR044893">
    <property type="entry name" value="RNA_pol_Rpb1_clamp_domain"/>
</dbReference>
<dbReference type="PANTHER" id="PTHR19376">
    <property type="entry name" value="DNA-DIRECTED RNA POLYMERASE"/>
    <property type="match status" value="1"/>
</dbReference>
<dbReference type="PANTHER" id="PTHR19376:SF54">
    <property type="entry name" value="DNA-DIRECTED RNA POLYMERASE SUBUNIT BETA"/>
    <property type="match status" value="1"/>
</dbReference>
<dbReference type="Pfam" id="PF04997">
    <property type="entry name" value="RNA_pol_Rpb1_1"/>
    <property type="match status" value="1"/>
</dbReference>
<dbReference type="SUPFAM" id="SSF64484">
    <property type="entry name" value="beta and beta-prime subunits of DNA dependent RNA-polymerase"/>
    <property type="match status" value="1"/>
</dbReference>
<organism>
    <name type="scientific">Synechococcus sp. (strain WH8103)</name>
    <dbReference type="NCBI Taxonomy" id="29410"/>
    <lineage>
        <taxon>Bacteria</taxon>
        <taxon>Bacillati</taxon>
        <taxon>Cyanobacteriota</taxon>
        <taxon>Cyanophyceae</taxon>
        <taxon>Synechococcales</taxon>
        <taxon>Synechococcaceae</taxon>
        <taxon>Synechococcus</taxon>
    </lineage>
</organism>
<proteinExistence type="inferred from homology"/>
<keyword id="KW-0240">DNA-directed RNA polymerase</keyword>
<keyword id="KW-0479">Metal-binding</keyword>
<keyword id="KW-0548">Nucleotidyltransferase</keyword>
<keyword id="KW-0804">Transcription</keyword>
<keyword id="KW-0808">Transferase</keyword>
<keyword id="KW-0862">Zinc</keyword>
<gene>
    <name type="primary">rpoC1</name>
</gene>
<evidence type="ECO:0000250" key="1"/>
<evidence type="ECO:0000250" key="2">
    <source>
        <dbReference type="UniProtKB" id="P0A8T7"/>
    </source>
</evidence>
<evidence type="ECO:0000305" key="3"/>
<name>RPOC1_SYNPZ</name>